<accession>A2ZN77</accession>
<accession>Q2QLI1</accession>
<accession>Q2QLI2</accession>
<accession>Q4PKJ3</accession>
<accession>Q84KR5</accession>
<protein>
    <recommendedName>
        <fullName>Sucrose transport protein SUT2</fullName>
    </recommendedName>
    <alternativeName>
        <fullName>SUC4-like protein</fullName>
    </alternativeName>
    <alternativeName>
        <fullName>Sucrose permease 2</fullName>
    </alternativeName>
    <alternativeName>
        <fullName>Sucrose transporter 2</fullName>
        <shortName>OsSUT2</shortName>
    </alternativeName>
    <alternativeName>
        <fullName>Sucrose-proton symporter 2</fullName>
    </alternativeName>
</protein>
<sequence>MPRRPSGGGGGAGPAAAAVRKVPLRKLLRAASVACGVQFGWALQLSLLTPYVQELGIPHAFASLVWLCGPLSGLLVQPLVGHLSDRIAPAASPLGRRRPFIAAGAASIAAAVLTVGFSADLGRIFGDSITPGSTRLGAIIVYLVGFWLLDVGNNATQGPCRAFLADLTENDPRRTRIANAYFSLFMALGNILGYATGAYSGWYKIFPFTVTPSCSISCANLKSAFLLDIIILVVTTCITVASVQEPQSLGSDEADHPSTEQEAFLWELFGSFRYFTLPVWMVLIVTALTWIGWFPFILFDTDWMGREIYRGSPDDPSITQSYHDGVRMGSFGLMLNSVLLGFTSIVLEKLCRKWGAGLVWGVSNILMALCFVAMLVITYVAKNMDYPPSGVPPTGIVIASLVVFTILGAPLAITYSIPYAMAASRVENLGLGQGLAMGILNLAIVIPQVIVSLGSGPWDQLFGGGNAPAFAVAAAASFIGGLVAILGLPRARIASRRRGHR</sequence>
<gene>
    <name type="primary">SUT2</name>
    <name type="synonym">SUT2M</name>
    <name type="ORF">OsI_038020</name>
</gene>
<evidence type="ECO:0000250" key="1"/>
<evidence type="ECO:0000255" key="2"/>
<evidence type="ECO:0000269" key="3">
    <source>
    </source>
</evidence>
<evidence type="ECO:0000305" key="4"/>
<organism>
    <name type="scientific">Oryza sativa subsp. indica</name>
    <name type="common">Rice</name>
    <dbReference type="NCBI Taxonomy" id="39946"/>
    <lineage>
        <taxon>Eukaryota</taxon>
        <taxon>Viridiplantae</taxon>
        <taxon>Streptophyta</taxon>
        <taxon>Embryophyta</taxon>
        <taxon>Tracheophyta</taxon>
        <taxon>Spermatophyta</taxon>
        <taxon>Magnoliopsida</taxon>
        <taxon>Liliopsida</taxon>
        <taxon>Poales</taxon>
        <taxon>Poaceae</taxon>
        <taxon>BOP clade</taxon>
        <taxon>Oryzoideae</taxon>
        <taxon>Oryzeae</taxon>
        <taxon>Oryzinae</taxon>
        <taxon>Oryza</taxon>
        <taxon>Oryza sativa</taxon>
    </lineage>
</organism>
<comment type="function">
    <text evidence="1">Responsible for the transport of sucrose into the cell, with the concomitant uptake of protons (symport system). May also transport other glucosides (By similarity).</text>
</comment>
<comment type="pathway">
    <text>Glycan biosynthesis; sucrose metabolism.</text>
</comment>
<comment type="subunit">
    <text evidence="1">Homodimer.</text>
</comment>
<comment type="subcellular location">
    <subcellularLocation>
        <location evidence="1">Cell membrane</location>
        <topology evidence="1">Multi-pass membrane protein</topology>
    </subcellularLocation>
</comment>
<comment type="tissue specificity">
    <text evidence="3">Expressed in source leaf blades.</text>
</comment>
<comment type="developmental stage">
    <text evidence="3">Expressed in developing caryopses from 1 to 7 days after flowering (DAF) and then declines to nearly undetectable levels by 10 DAF.</text>
</comment>
<comment type="similarity">
    <text evidence="4">Belongs to the glycoside-pentoside-hexuronide (GPH) cation symporter transporter (TC 2.A.2.4) family.</text>
</comment>
<comment type="sequence caution" evidence="4">
    <conflict type="erroneous gene model prediction">
        <sequence resource="EMBL-CDS" id="EAY84061"/>
    </conflict>
</comment>
<comment type="sequence caution" evidence="4">
    <conflict type="frameshift">
        <sequence resource="EMBL-CDS" id="EAY84061"/>
    </conflict>
</comment>
<dbReference type="EMBL" id="DQ072592">
    <property type="protein sequence ID" value="AAY83288.1"/>
    <property type="molecule type" value="mRNA"/>
</dbReference>
<dbReference type="EMBL" id="CM000137">
    <property type="protein sequence ID" value="EAY84061.1"/>
    <property type="status" value="ALT_SEQ"/>
    <property type="molecule type" value="Genomic_DNA"/>
</dbReference>
<dbReference type="SMR" id="A2ZN77"/>
<dbReference type="STRING" id="39946.A2ZN77"/>
<dbReference type="EnsemblPlants" id="OsGoSa_12g0022130.02">
    <property type="protein sequence ID" value="OsGoSa_12g0022130.02"/>
    <property type="gene ID" value="OsGoSa_12g0022130"/>
</dbReference>
<dbReference type="EnsemblPlants" id="OsIR64_12g0021750.01">
    <property type="protein sequence ID" value="OsIR64_12g0021750.01"/>
    <property type="gene ID" value="OsIR64_12g0021750"/>
</dbReference>
<dbReference type="EnsemblPlants" id="OsKYG_12g0022280.02">
    <property type="protein sequence ID" value="OsKYG_12g0022280.02"/>
    <property type="gene ID" value="OsKYG_12g0022280"/>
</dbReference>
<dbReference type="EnsemblPlants" id="OsLaMu_12g0022490.01">
    <property type="protein sequence ID" value="OsLaMu_12g0022490.01"/>
    <property type="gene ID" value="OsLaMu_12g0022490"/>
</dbReference>
<dbReference type="EnsemblPlants" id="OsLima_12g0022030.02">
    <property type="protein sequence ID" value="OsLima_12g0022030.02"/>
    <property type="gene ID" value="OsLima_12g0022030"/>
</dbReference>
<dbReference type="Gramene" id="OsGoSa_12g0022130.02">
    <property type="protein sequence ID" value="OsGoSa_12g0022130.02"/>
    <property type="gene ID" value="OsGoSa_12g0022130"/>
</dbReference>
<dbReference type="Gramene" id="OsIR64_12g0021750.01">
    <property type="protein sequence ID" value="OsIR64_12g0021750.01"/>
    <property type="gene ID" value="OsIR64_12g0021750"/>
</dbReference>
<dbReference type="Gramene" id="OsKYG_12g0022280.02">
    <property type="protein sequence ID" value="OsKYG_12g0022280.02"/>
    <property type="gene ID" value="OsKYG_12g0022280"/>
</dbReference>
<dbReference type="Gramene" id="OsLaMu_12g0022490.01">
    <property type="protein sequence ID" value="OsLaMu_12g0022490.01"/>
    <property type="gene ID" value="OsLaMu_12g0022490"/>
</dbReference>
<dbReference type="Gramene" id="OsLima_12g0022030.02">
    <property type="protein sequence ID" value="OsLima_12g0022030.02"/>
    <property type="gene ID" value="OsLima_12g0022030"/>
</dbReference>
<dbReference type="HOGENOM" id="CLU_025234_3_0_1"/>
<dbReference type="OrthoDB" id="28755at2759"/>
<dbReference type="UniPathway" id="UPA00238"/>
<dbReference type="Proteomes" id="UP000007015">
    <property type="component" value="Chromosome 12"/>
</dbReference>
<dbReference type="GO" id="GO:0005886">
    <property type="term" value="C:plasma membrane"/>
    <property type="evidence" value="ECO:0007669"/>
    <property type="project" value="UniProtKB-SubCell"/>
</dbReference>
<dbReference type="GO" id="GO:0005773">
    <property type="term" value="C:vacuole"/>
    <property type="evidence" value="ECO:0007669"/>
    <property type="project" value="TreeGrafter"/>
</dbReference>
<dbReference type="GO" id="GO:0008506">
    <property type="term" value="F:sucrose:proton symporter activity"/>
    <property type="evidence" value="ECO:0007669"/>
    <property type="project" value="TreeGrafter"/>
</dbReference>
<dbReference type="GO" id="GO:0005985">
    <property type="term" value="P:sucrose metabolic process"/>
    <property type="evidence" value="ECO:0007669"/>
    <property type="project" value="UniProtKB-UniPathway"/>
</dbReference>
<dbReference type="CDD" id="cd17313">
    <property type="entry name" value="MFS_SLC45_SUC"/>
    <property type="match status" value="1"/>
</dbReference>
<dbReference type="FunFam" id="1.20.1250.20:FF:000174">
    <property type="entry name" value="Sucrose transport protein"/>
    <property type="match status" value="1"/>
</dbReference>
<dbReference type="Gene3D" id="1.20.1250.20">
    <property type="entry name" value="MFS general substrate transporter like domains"/>
    <property type="match status" value="1"/>
</dbReference>
<dbReference type="InterPro" id="IPR011701">
    <property type="entry name" value="MFS"/>
</dbReference>
<dbReference type="InterPro" id="IPR036259">
    <property type="entry name" value="MFS_trans_sf"/>
</dbReference>
<dbReference type="InterPro" id="IPR005989">
    <property type="entry name" value="Suc_symporter_pln"/>
</dbReference>
<dbReference type="NCBIfam" id="TIGR01301">
    <property type="entry name" value="GPH_sucrose"/>
    <property type="match status" value="1"/>
</dbReference>
<dbReference type="PANTHER" id="PTHR19432:SF90">
    <property type="entry name" value="SUCROSE TRANSPORT PROTEIN SUC4"/>
    <property type="match status" value="1"/>
</dbReference>
<dbReference type="PANTHER" id="PTHR19432">
    <property type="entry name" value="SUGAR TRANSPORTER"/>
    <property type="match status" value="1"/>
</dbReference>
<dbReference type="Pfam" id="PF07690">
    <property type="entry name" value="MFS_1"/>
    <property type="match status" value="1"/>
</dbReference>
<dbReference type="SUPFAM" id="SSF103473">
    <property type="entry name" value="MFS general substrate transporter"/>
    <property type="match status" value="1"/>
</dbReference>
<proteinExistence type="evidence at transcript level"/>
<keyword id="KW-1003">Cell membrane</keyword>
<keyword id="KW-0472">Membrane</keyword>
<keyword id="KW-1185">Reference proteome</keyword>
<keyword id="KW-0762">Sugar transport</keyword>
<keyword id="KW-0769">Symport</keyword>
<keyword id="KW-0812">Transmembrane</keyword>
<keyword id="KW-1133">Transmembrane helix</keyword>
<keyword id="KW-0813">Transport</keyword>
<feature type="chain" id="PRO_0000295652" description="Sucrose transport protein SUT2">
    <location>
        <begin position="1"/>
        <end position="501"/>
    </location>
</feature>
<feature type="topological domain" description="Cytoplasmic" evidence="2">
    <location>
        <begin position="1"/>
        <end position="31"/>
    </location>
</feature>
<feature type="transmembrane region" description="Helical" evidence="2">
    <location>
        <begin position="32"/>
        <end position="52"/>
    </location>
</feature>
<feature type="topological domain" description="Extracellular" evidence="2">
    <location>
        <begin position="53"/>
        <end position="55"/>
    </location>
</feature>
<feature type="transmembrane region" description="Helical" evidence="2">
    <location>
        <begin position="56"/>
        <end position="76"/>
    </location>
</feature>
<feature type="topological domain" description="Cytoplasmic" evidence="2">
    <location>
        <begin position="77"/>
        <end position="98"/>
    </location>
</feature>
<feature type="transmembrane region" description="Helical" evidence="2">
    <location>
        <begin position="99"/>
        <end position="119"/>
    </location>
</feature>
<feature type="topological domain" description="Extracellular" evidence="2">
    <location>
        <begin position="120"/>
        <end position="135"/>
    </location>
</feature>
<feature type="transmembrane region" description="Helical" evidence="2">
    <location>
        <begin position="136"/>
        <end position="156"/>
    </location>
</feature>
<feature type="topological domain" description="Cytoplasmic" evidence="2">
    <location>
        <begin position="157"/>
        <end position="176"/>
    </location>
</feature>
<feature type="transmembrane region" description="Helical" evidence="2">
    <location>
        <begin position="177"/>
        <end position="197"/>
    </location>
</feature>
<feature type="topological domain" description="Extracellular" evidence="2">
    <location>
        <begin position="198"/>
        <end position="222"/>
    </location>
</feature>
<feature type="transmembrane region" description="Helical" evidence="2">
    <location>
        <begin position="223"/>
        <end position="243"/>
    </location>
</feature>
<feature type="topological domain" description="Cytoplasmic" evidence="2">
    <location>
        <begin position="244"/>
        <end position="278"/>
    </location>
</feature>
<feature type="transmembrane region" description="Helical" evidence="2">
    <location>
        <begin position="279"/>
        <end position="299"/>
    </location>
</feature>
<feature type="topological domain" description="Extracellular" evidence="2">
    <location>
        <begin position="300"/>
        <end position="327"/>
    </location>
</feature>
<feature type="transmembrane region" description="Helical" evidence="2">
    <location>
        <begin position="328"/>
        <end position="348"/>
    </location>
</feature>
<feature type="topological domain" description="Cytoplasmic" evidence="2">
    <location>
        <begin position="349"/>
        <end position="356"/>
    </location>
</feature>
<feature type="transmembrane region" description="Helical" evidence="2">
    <location>
        <begin position="357"/>
        <end position="377"/>
    </location>
</feature>
<feature type="topological domain" description="Extracellular" evidence="2">
    <location>
        <begin position="378"/>
        <end position="394"/>
    </location>
</feature>
<feature type="transmembrane region" description="Helical" evidence="2">
    <location>
        <begin position="395"/>
        <end position="415"/>
    </location>
</feature>
<feature type="topological domain" description="Cytoplasmic" evidence="2">
    <location>
        <begin position="416"/>
        <end position="433"/>
    </location>
</feature>
<feature type="transmembrane region" description="Helical" evidence="2">
    <location>
        <begin position="434"/>
        <end position="454"/>
    </location>
</feature>
<feature type="topological domain" description="Extracellular" evidence="2">
    <location>
        <begin position="455"/>
        <end position="467"/>
    </location>
</feature>
<feature type="transmembrane region" description="Helical" evidence="2">
    <location>
        <begin position="468"/>
        <end position="488"/>
    </location>
</feature>
<feature type="topological domain" description="Cytoplasmic" evidence="2">
    <location>
        <begin position="489"/>
        <end position="501"/>
    </location>
</feature>
<name>SUT2_ORYSI</name>
<reference key="1">
    <citation type="journal article" date="2008" name="J. Integr. Plant Biol.">
        <title>Cloning and expression analysis of rice sucrose transporter genes OsSUT2M and OsSUT5Z.</title>
        <authorList>
            <person name="Sun A.J."/>
            <person name="Xu H.L."/>
            <person name="Gong W.K."/>
            <person name="Zhai H.L."/>
            <person name="Meng K."/>
            <person name="Wang Y.Q."/>
            <person name="Wei X.L."/>
            <person name="Xiao G.F."/>
            <person name="Zhu Z."/>
        </authorList>
    </citation>
    <scope>NUCLEOTIDE SEQUENCE [MRNA]</scope>
    <scope>TISSUE SPECIFICITY</scope>
    <scope>DEVELOPMENTAL STAGE</scope>
    <source>
        <strain>cv. Minghui 86</strain>
        <tissue>Seedling</tissue>
    </source>
</reference>
<reference key="2">
    <citation type="journal article" date="2005" name="PLoS Biol.">
        <title>The genomes of Oryza sativa: a history of duplications.</title>
        <authorList>
            <person name="Yu J."/>
            <person name="Wang J."/>
            <person name="Lin W."/>
            <person name="Li S."/>
            <person name="Li H."/>
            <person name="Zhou J."/>
            <person name="Ni P."/>
            <person name="Dong W."/>
            <person name="Hu S."/>
            <person name="Zeng C."/>
            <person name="Zhang J."/>
            <person name="Zhang Y."/>
            <person name="Li R."/>
            <person name="Xu Z."/>
            <person name="Li S."/>
            <person name="Li X."/>
            <person name="Zheng H."/>
            <person name="Cong L."/>
            <person name="Lin L."/>
            <person name="Yin J."/>
            <person name="Geng J."/>
            <person name="Li G."/>
            <person name="Shi J."/>
            <person name="Liu J."/>
            <person name="Lv H."/>
            <person name="Li J."/>
            <person name="Wang J."/>
            <person name="Deng Y."/>
            <person name="Ran L."/>
            <person name="Shi X."/>
            <person name="Wang X."/>
            <person name="Wu Q."/>
            <person name="Li C."/>
            <person name="Ren X."/>
            <person name="Wang J."/>
            <person name="Wang X."/>
            <person name="Li D."/>
            <person name="Liu D."/>
            <person name="Zhang X."/>
            <person name="Ji Z."/>
            <person name="Zhao W."/>
            <person name="Sun Y."/>
            <person name="Zhang Z."/>
            <person name="Bao J."/>
            <person name="Han Y."/>
            <person name="Dong L."/>
            <person name="Ji J."/>
            <person name="Chen P."/>
            <person name="Wu S."/>
            <person name="Liu J."/>
            <person name="Xiao Y."/>
            <person name="Bu D."/>
            <person name="Tan J."/>
            <person name="Yang L."/>
            <person name="Ye C."/>
            <person name="Zhang J."/>
            <person name="Xu J."/>
            <person name="Zhou Y."/>
            <person name="Yu Y."/>
            <person name="Zhang B."/>
            <person name="Zhuang S."/>
            <person name="Wei H."/>
            <person name="Liu B."/>
            <person name="Lei M."/>
            <person name="Yu H."/>
            <person name="Li Y."/>
            <person name="Xu H."/>
            <person name="Wei S."/>
            <person name="He X."/>
            <person name="Fang L."/>
            <person name="Zhang Z."/>
            <person name="Zhang Y."/>
            <person name="Huang X."/>
            <person name="Su Z."/>
            <person name="Tong W."/>
            <person name="Li J."/>
            <person name="Tong Z."/>
            <person name="Li S."/>
            <person name="Ye J."/>
            <person name="Wang L."/>
            <person name="Fang L."/>
            <person name="Lei T."/>
            <person name="Chen C.-S."/>
            <person name="Chen H.-C."/>
            <person name="Xu Z."/>
            <person name="Li H."/>
            <person name="Huang H."/>
            <person name="Zhang F."/>
            <person name="Xu H."/>
            <person name="Li N."/>
            <person name="Zhao C."/>
            <person name="Li S."/>
            <person name="Dong L."/>
            <person name="Huang Y."/>
            <person name="Li L."/>
            <person name="Xi Y."/>
            <person name="Qi Q."/>
            <person name="Li W."/>
            <person name="Zhang B."/>
            <person name="Hu W."/>
            <person name="Zhang Y."/>
            <person name="Tian X."/>
            <person name="Jiao Y."/>
            <person name="Liang X."/>
            <person name="Jin J."/>
            <person name="Gao L."/>
            <person name="Zheng W."/>
            <person name="Hao B."/>
            <person name="Liu S.-M."/>
            <person name="Wang W."/>
            <person name="Yuan L."/>
            <person name="Cao M."/>
            <person name="McDermott J."/>
            <person name="Samudrala R."/>
            <person name="Wang J."/>
            <person name="Wong G.K.-S."/>
            <person name="Yang H."/>
        </authorList>
    </citation>
    <scope>NUCLEOTIDE SEQUENCE [LARGE SCALE GENOMIC DNA]</scope>
    <source>
        <strain>cv. 93-11</strain>
    </source>
</reference>